<evidence type="ECO:0000255" key="1">
    <source>
        <dbReference type="HAMAP-Rule" id="MF_01678"/>
    </source>
</evidence>
<evidence type="ECO:0000305" key="2"/>
<organism>
    <name type="scientific">Anaeromyxobacter sp. (strain K)</name>
    <dbReference type="NCBI Taxonomy" id="447217"/>
    <lineage>
        <taxon>Bacteria</taxon>
        <taxon>Pseudomonadati</taxon>
        <taxon>Myxococcota</taxon>
        <taxon>Myxococcia</taxon>
        <taxon>Myxococcales</taxon>
        <taxon>Cystobacterineae</taxon>
        <taxon>Anaeromyxobacteraceae</taxon>
        <taxon>Anaeromyxobacter</taxon>
    </lineage>
</organism>
<sequence>MTVREPLRPVLYDDARDLVRLLDQKALPAEERWLELSTADAVAAAIRDLTVRGAPAIGVAAAYALAVEARRGAGPERLRAAADLLARARPTAVNLAWAVRRMSARLGAPAADVLAEAHAIRDEDEAACRRIGALGAPLVPARARVLTHCNAGALATAGYGTALGVVRAAVESGNAISVFADETRPFLQGARLTAWELHRDGIPVTLLTDGMAGWLMARGEIGCVVVGADRIAANGDVANKIGTYALAVLAAHHRLPFYVAAPWSTVDLATPTGADIPIEERGADEVVMLAGQRIAPAGVPARYPAFDVTPAALVTAIVTERGVVRAPHAAGLATLASAR</sequence>
<proteinExistence type="inferred from homology"/>
<reference key="1">
    <citation type="submission" date="2008-08" db="EMBL/GenBank/DDBJ databases">
        <title>Complete sequence of Anaeromyxobacter sp. K.</title>
        <authorList>
            <consortium name="US DOE Joint Genome Institute"/>
            <person name="Lucas S."/>
            <person name="Copeland A."/>
            <person name="Lapidus A."/>
            <person name="Glavina del Rio T."/>
            <person name="Dalin E."/>
            <person name="Tice H."/>
            <person name="Bruce D."/>
            <person name="Goodwin L."/>
            <person name="Pitluck S."/>
            <person name="Saunders E."/>
            <person name="Brettin T."/>
            <person name="Detter J.C."/>
            <person name="Han C."/>
            <person name="Larimer F."/>
            <person name="Land M."/>
            <person name="Hauser L."/>
            <person name="Kyrpides N."/>
            <person name="Ovchinnikiva G."/>
            <person name="Beliaev A."/>
        </authorList>
    </citation>
    <scope>NUCLEOTIDE SEQUENCE [LARGE SCALE GENOMIC DNA]</scope>
    <source>
        <strain>K</strain>
    </source>
</reference>
<name>MTNA_ANASK</name>
<comment type="function">
    <text evidence="1">Catalyzes the interconversion of methylthioribose-1-phosphate (MTR-1-P) into methylthioribulose-1-phosphate (MTRu-1-P).</text>
</comment>
<comment type="catalytic activity">
    <reaction evidence="1">
        <text>5-(methylsulfanyl)-alpha-D-ribose 1-phosphate = 5-(methylsulfanyl)-D-ribulose 1-phosphate</text>
        <dbReference type="Rhea" id="RHEA:19989"/>
        <dbReference type="ChEBI" id="CHEBI:58533"/>
        <dbReference type="ChEBI" id="CHEBI:58548"/>
        <dbReference type="EC" id="5.3.1.23"/>
    </reaction>
</comment>
<comment type="pathway">
    <text evidence="1">Amino-acid biosynthesis; L-methionine biosynthesis via salvage pathway; L-methionine from S-methyl-5-thio-alpha-D-ribose 1-phosphate: step 1/6.</text>
</comment>
<comment type="similarity">
    <text evidence="2">Belongs to the eIF-2B alpha/beta/delta subunits family. MtnA subfamily.</text>
</comment>
<gene>
    <name evidence="1" type="primary">mtnA</name>
    <name type="ordered locus">AnaeK_4317</name>
</gene>
<keyword id="KW-0028">Amino-acid biosynthesis</keyword>
<keyword id="KW-0413">Isomerase</keyword>
<keyword id="KW-0486">Methionine biosynthesis</keyword>
<dbReference type="EC" id="5.3.1.23" evidence="1"/>
<dbReference type="EMBL" id="CP001131">
    <property type="protein sequence ID" value="ACG75520.1"/>
    <property type="molecule type" value="Genomic_DNA"/>
</dbReference>
<dbReference type="RefSeq" id="WP_012528271.1">
    <property type="nucleotide sequence ID" value="NC_011145.1"/>
</dbReference>
<dbReference type="SMR" id="B4UIU8"/>
<dbReference type="KEGG" id="ank:AnaeK_4317"/>
<dbReference type="HOGENOM" id="CLU_016218_1_2_7"/>
<dbReference type="OrthoDB" id="9803436at2"/>
<dbReference type="UniPathway" id="UPA00904">
    <property type="reaction ID" value="UER00874"/>
</dbReference>
<dbReference type="Proteomes" id="UP000001871">
    <property type="component" value="Chromosome"/>
</dbReference>
<dbReference type="GO" id="GO:0046523">
    <property type="term" value="F:S-methyl-5-thioribose-1-phosphate isomerase activity"/>
    <property type="evidence" value="ECO:0007669"/>
    <property type="project" value="UniProtKB-UniRule"/>
</dbReference>
<dbReference type="GO" id="GO:0019509">
    <property type="term" value="P:L-methionine salvage from methylthioadenosine"/>
    <property type="evidence" value="ECO:0007669"/>
    <property type="project" value="UniProtKB-UniRule"/>
</dbReference>
<dbReference type="FunFam" id="1.20.120.420:FF:000003">
    <property type="entry name" value="Methylthioribose-1-phosphate isomerase"/>
    <property type="match status" value="1"/>
</dbReference>
<dbReference type="FunFam" id="3.40.50.10470:FF:000006">
    <property type="entry name" value="Methylthioribose-1-phosphate isomerase"/>
    <property type="match status" value="1"/>
</dbReference>
<dbReference type="Gene3D" id="1.20.120.420">
    <property type="entry name" value="translation initiation factor eif-2b, domain 1"/>
    <property type="match status" value="1"/>
</dbReference>
<dbReference type="Gene3D" id="3.40.50.10470">
    <property type="entry name" value="Translation initiation factor eif-2b, domain 2"/>
    <property type="match status" value="1"/>
</dbReference>
<dbReference type="HAMAP" id="MF_01678">
    <property type="entry name" value="Salvage_MtnA"/>
    <property type="match status" value="1"/>
</dbReference>
<dbReference type="InterPro" id="IPR000649">
    <property type="entry name" value="IF-2B-related"/>
</dbReference>
<dbReference type="InterPro" id="IPR005251">
    <property type="entry name" value="IF-M1Pi"/>
</dbReference>
<dbReference type="InterPro" id="IPR042529">
    <property type="entry name" value="IF_2B-like_C"/>
</dbReference>
<dbReference type="InterPro" id="IPR011559">
    <property type="entry name" value="Initiation_fac_2B_a/b/d"/>
</dbReference>
<dbReference type="InterPro" id="IPR027363">
    <property type="entry name" value="M1Pi_N"/>
</dbReference>
<dbReference type="InterPro" id="IPR037171">
    <property type="entry name" value="NagB/RpiA_transferase-like"/>
</dbReference>
<dbReference type="NCBIfam" id="TIGR00524">
    <property type="entry name" value="eIF-2B_rel"/>
    <property type="match status" value="1"/>
</dbReference>
<dbReference type="NCBIfam" id="NF004326">
    <property type="entry name" value="PRK05720.1"/>
    <property type="match status" value="1"/>
</dbReference>
<dbReference type="NCBIfam" id="TIGR00512">
    <property type="entry name" value="salvage_mtnA"/>
    <property type="match status" value="1"/>
</dbReference>
<dbReference type="PANTHER" id="PTHR43475">
    <property type="entry name" value="METHYLTHIORIBOSE-1-PHOSPHATE ISOMERASE"/>
    <property type="match status" value="1"/>
</dbReference>
<dbReference type="PANTHER" id="PTHR43475:SF1">
    <property type="entry name" value="METHYLTHIORIBOSE-1-PHOSPHATE ISOMERASE"/>
    <property type="match status" value="1"/>
</dbReference>
<dbReference type="Pfam" id="PF01008">
    <property type="entry name" value="IF-2B"/>
    <property type="match status" value="1"/>
</dbReference>
<dbReference type="SUPFAM" id="SSF100950">
    <property type="entry name" value="NagB/RpiA/CoA transferase-like"/>
    <property type="match status" value="1"/>
</dbReference>
<protein>
    <recommendedName>
        <fullName evidence="1">Methylthioribose-1-phosphate isomerase</fullName>
        <shortName evidence="1">M1Pi</shortName>
        <shortName evidence="1">MTR-1-P isomerase</shortName>
        <ecNumber evidence="1">5.3.1.23</ecNumber>
    </recommendedName>
    <alternativeName>
        <fullName evidence="1">S-methyl-5-thioribose-1-phosphate isomerase</fullName>
    </alternativeName>
</protein>
<accession>B4UIU8</accession>
<feature type="chain" id="PRO_0000357139" description="Methylthioribose-1-phosphate isomerase">
    <location>
        <begin position="1"/>
        <end position="339"/>
    </location>
</feature>
<feature type="active site" description="Proton donor" evidence="1">
    <location>
        <position position="229"/>
    </location>
</feature>
<feature type="binding site" evidence="1">
    <location>
        <begin position="52"/>
        <end position="54"/>
    </location>
    <ligand>
        <name>substrate</name>
    </ligand>
</feature>
<feature type="binding site" evidence="1">
    <location>
        <position position="89"/>
    </location>
    <ligand>
        <name>substrate</name>
    </ligand>
</feature>
<feature type="binding site" evidence="1">
    <location>
        <position position="188"/>
    </location>
    <ligand>
        <name>substrate</name>
    </ligand>
</feature>
<feature type="binding site" evidence="1">
    <location>
        <begin position="239"/>
        <end position="240"/>
    </location>
    <ligand>
        <name>substrate</name>
    </ligand>
</feature>
<feature type="site" description="Transition state stabilizer" evidence="1">
    <location>
        <position position="149"/>
    </location>
</feature>